<protein>
    <recommendedName>
        <fullName>Probable G-protein coupled receptor AH9.4</fullName>
    </recommendedName>
</protein>
<accession>Q10907</accession>
<organism>
    <name type="scientific">Caenorhabditis elegans</name>
    <dbReference type="NCBI Taxonomy" id="6239"/>
    <lineage>
        <taxon>Eukaryota</taxon>
        <taxon>Metazoa</taxon>
        <taxon>Ecdysozoa</taxon>
        <taxon>Nematoda</taxon>
        <taxon>Chromadorea</taxon>
        <taxon>Rhabditida</taxon>
        <taxon>Rhabditina</taxon>
        <taxon>Rhabditomorpha</taxon>
        <taxon>Rhabditoidea</taxon>
        <taxon>Rhabditidae</taxon>
        <taxon>Peloderinae</taxon>
        <taxon>Caenorhabditis</taxon>
    </lineage>
</organism>
<reference key="1">
    <citation type="journal article" date="1998" name="Science">
        <title>Genome sequence of the nematode C. elegans: a platform for investigating biology.</title>
        <authorList>
            <consortium name="The C. elegans sequencing consortium"/>
        </authorList>
    </citation>
    <scope>NUCLEOTIDE SEQUENCE [LARGE SCALE GENOMIC DNA]</scope>
    <source>
        <strain>Bristol N2</strain>
    </source>
</reference>
<keyword id="KW-1003">Cell membrane</keyword>
<keyword id="KW-0297">G-protein coupled receptor</keyword>
<keyword id="KW-0472">Membrane</keyword>
<keyword id="KW-0675">Receptor</keyword>
<keyword id="KW-1185">Reference proteome</keyword>
<keyword id="KW-0807">Transducer</keyword>
<keyword id="KW-0812">Transmembrane</keyword>
<keyword id="KW-1133">Transmembrane helix</keyword>
<proteinExistence type="inferred from homology"/>
<gene>
    <name type="ORF">AH9.4</name>
</gene>
<name>YWO4_CAEEL</name>
<dbReference type="EMBL" id="FO080097">
    <property type="protein sequence ID" value="CCD61186.1"/>
    <property type="molecule type" value="Genomic_DNA"/>
</dbReference>
<dbReference type="PIR" id="T30088">
    <property type="entry name" value="T30088"/>
</dbReference>
<dbReference type="RefSeq" id="NP_508417.2">
    <property type="nucleotide sequence ID" value="NM_076016.5"/>
</dbReference>
<dbReference type="SMR" id="Q10907"/>
<dbReference type="STRING" id="6239.AH9.4.1"/>
<dbReference type="PaxDb" id="6239-AH9.4"/>
<dbReference type="EnsemblMetazoa" id="AH9.4.1">
    <property type="protein sequence ID" value="AH9.4.1"/>
    <property type="gene ID" value="WBGene00015000"/>
</dbReference>
<dbReference type="GeneID" id="181811"/>
<dbReference type="KEGG" id="cel:CELE_AH9.4"/>
<dbReference type="UCSC" id="AH9.4">
    <property type="organism name" value="c. elegans"/>
</dbReference>
<dbReference type="AGR" id="WB:WBGene00015000"/>
<dbReference type="CTD" id="181811"/>
<dbReference type="WormBase" id="AH9.4">
    <property type="protein sequence ID" value="CE30841"/>
    <property type="gene ID" value="WBGene00015000"/>
</dbReference>
<dbReference type="eggNOG" id="ENOG502SNJE">
    <property type="taxonomic scope" value="Eukaryota"/>
</dbReference>
<dbReference type="GeneTree" id="ENSGT00970000197503"/>
<dbReference type="HOGENOM" id="CLU_767758_0_0_1"/>
<dbReference type="InParanoid" id="Q10907"/>
<dbReference type="OMA" id="KTAMVMR"/>
<dbReference type="OrthoDB" id="5864054at2759"/>
<dbReference type="PhylomeDB" id="Q10907"/>
<dbReference type="PRO" id="PR:Q10907"/>
<dbReference type="Proteomes" id="UP000001940">
    <property type="component" value="Chromosome X"/>
</dbReference>
<dbReference type="Bgee" id="WBGene00015000">
    <property type="expression patterns" value="Expressed in larva and 1 other cell type or tissue"/>
</dbReference>
<dbReference type="GO" id="GO:0005886">
    <property type="term" value="C:plasma membrane"/>
    <property type="evidence" value="ECO:0000318"/>
    <property type="project" value="GO_Central"/>
</dbReference>
<dbReference type="GO" id="GO:0008528">
    <property type="term" value="F:G protein-coupled peptide receptor activity"/>
    <property type="evidence" value="ECO:0000318"/>
    <property type="project" value="GO_Central"/>
</dbReference>
<dbReference type="GO" id="GO:0007218">
    <property type="term" value="P:neuropeptide signaling pathway"/>
    <property type="evidence" value="ECO:0000318"/>
    <property type="project" value="GO_Central"/>
</dbReference>
<dbReference type="CDD" id="cd14978">
    <property type="entry name" value="7tmA_FMRFamide_R-like"/>
    <property type="match status" value="1"/>
</dbReference>
<dbReference type="Gene3D" id="1.20.1070.10">
    <property type="entry name" value="Rhodopsin 7-helix transmembrane proteins"/>
    <property type="match status" value="1"/>
</dbReference>
<dbReference type="InterPro" id="IPR000276">
    <property type="entry name" value="GPCR_Rhodpsn"/>
</dbReference>
<dbReference type="InterPro" id="IPR017452">
    <property type="entry name" value="GPCR_Rhodpsn_7TM"/>
</dbReference>
<dbReference type="InterPro" id="IPR052665">
    <property type="entry name" value="Neuropeptide-GPCR"/>
</dbReference>
<dbReference type="PANTHER" id="PTHR24224">
    <property type="entry name" value="CARDIOACCELERATORY PEPTIDE RECEPTOR-RELATED"/>
    <property type="match status" value="1"/>
</dbReference>
<dbReference type="PANTHER" id="PTHR24224:SF37">
    <property type="entry name" value="G-PROTEIN COUPLED RECEPTORS FAMILY 1 PROFILE DOMAIN-CONTAINING PROTEIN"/>
    <property type="match status" value="1"/>
</dbReference>
<dbReference type="Pfam" id="PF00001">
    <property type="entry name" value="7tm_1"/>
    <property type="match status" value="1"/>
</dbReference>
<dbReference type="SUPFAM" id="SSF81321">
    <property type="entry name" value="Family A G protein-coupled receptor-like"/>
    <property type="match status" value="1"/>
</dbReference>
<dbReference type="PROSITE" id="PS50262">
    <property type="entry name" value="G_PROTEIN_RECEP_F1_2"/>
    <property type="match status" value="1"/>
</dbReference>
<evidence type="ECO:0000255" key="1"/>
<evidence type="ECO:0000255" key="2">
    <source>
        <dbReference type="PROSITE-ProRule" id="PRU00521"/>
    </source>
</evidence>
<evidence type="ECO:0000305" key="3"/>
<feature type="chain" id="PRO_0000070236" description="Probable G-protein coupled receptor AH9.4">
    <location>
        <begin position="1"/>
        <end position="364"/>
    </location>
</feature>
<feature type="topological domain" description="Extracellular" evidence="1">
    <location>
        <position position="1"/>
    </location>
</feature>
<feature type="transmembrane region" description="Helical; Name=1" evidence="1">
    <location>
        <begin position="2"/>
        <end position="22"/>
    </location>
</feature>
<feature type="topological domain" description="Cytoplasmic" evidence="1">
    <location>
        <begin position="23"/>
        <end position="48"/>
    </location>
</feature>
<feature type="transmembrane region" description="Helical; Name=2" evidence="1">
    <location>
        <begin position="49"/>
        <end position="69"/>
    </location>
</feature>
<feature type="topological domain" description="Extracellular" evidence="1">
    <location>
        <begin position="70"/>
        <end position="89"/>
    </location>
</feature>
<feature type="transmembrane region" description="Helical; Name=3" evidence="1">
    <location>
        <begin position="90"/>
        <end position="110"/>
    </location>
</feature>
<feature type="topological domain" description="Cytoplasmic" evidence="1">
    <location>
        <begin position="111"/>
        <end position="130"/>
    </location>
</feature>
<feature type="transmembrane region" description="Helical; Name=4" evidence="1">
    <location>
        <begin position="131"/>
        <end position="151"/>
    </location>
</feature>
<feature type="topological domain" description="Extracellular" evidence="1">
    <location>
        <begin position="152"/>
        <end position="177"/>
    </location>
</feature>
<feature type="transmembrane region" description="Helical; Name=5" evidence="1">
    <location>
        <begin position="178"/>
        <end position="198"/>
    </location>
</feature>
<feature type="topological domain" description="Cytoplasmic" evidence="1">
    <location>
        <begin position="199"/>
        <end position="277"/>
    </location>
</feature>
<feature type="transmembrane region" description="Helical; Name=6" evidence="1">
    <location>
        <begin position="278"/>
        <end position="298"/>
    </location>
</feature>
<feature type="topological domain" description="Extracellular" evidence="1">
    <location>
        <begin position="299"/>
        <end position="315"/>
    </location>
</feature>
<feature type="transmembrane region" description="Helical; Name=7" evidence="1">
    <location>
        <begin position="316"/>
        <end position="336"/>
    </location>
</feature>
<feature type="topological domain" description="Cytoplasmic" evidence="1">
    <location>
        <begin position="337"/>
        <end position="364"/>
    </location>
</feature>
<comment type="function">
    <text>Not known. Putative receptor.</text>
</comment>
<comment type="subcellular location">
    <subcellularLocation>
        <location evidence="3">Cell membrane</location>
        <topology evidence="3">Multi-pass membrane protein</topology>
    </subcellularLocation>
</comment>
<comment type="similarity">
    <text evidence="2">Belongs to the G-protein coupled receptor 1 family.</text>
</comment>
<sequence length="364" mass="41122">MAFLQSAYLVMVFTVPIAGVILNTYVLRKLIRVARKSVVRFETTSGLPLAAMSVGDSITLCALLMQAIFHITPKGEVPTVVLSSICKFGIFLIHSTSAFSVWCWFFLSVLRYIAVFHPFKYRTIWRQPRNALKFLAGAVGMFQIYTLIFVTYRQEEKSCGEYDVFHESAFKHVHLLDIFLFYAIPSLLRITLDFLVLIHCYSPFSVEGLDRVTIDRRYAISGPATTKRFSHTGETDTLDNKAHVALAISITASTNTPSVKRIHHGNPKKKTAMVMRSILISVLNLLLNLPSHIFRAWASYDESSLENEIVRTLEPIAQMMYFSQFACNAFYLATSIYETNGSPRNTVISSSNRHVSRCISDDEA</sequence>